<reference key="1">
    <citation type="journal article" date="1992" name="Virology">
        <title>Differences in transforming activity and coded amino acid sequence among E6 genes of several papillomaviruses associated with epidermodysplasia verruciformis.</title>
        <authorList>
            <person name="Kiyono T."/>
            <person name="Hiraiwa A."/>
            <person name="Ishibashi M."/>
        </authorList>
    </citation>
    <scope>NUCLEOTIDE SEQUENCE [GENOMIC DNA]</scope>
</reference>
<feature type="chain" id="PRO_0000133334" description="Protein E6">
    <location>
        <begin position="1"/>
        <end position="171"/>
    </location>
</feature>
<feature type="zinc finger region" evidence="1">
    <location>
        <begin position="58"/>
        <end position="94"/>
    </location>
</feature>
<feature type="zinc finger region" evidence="1">
    <location>
        <begin position="131"/>
        <end position="167"/>
    </location>
</feature>
<feature type="region of interest" description="Disordered" evidence="2">
    <location>
        <begin position="1"/>
        <end position="28"/>
    </location>
</feature>
<feature type="compositionally biased region" description="Polar residues" evidence="2">
    <location>
        <begin position="17"/>
        <end position="28"/>
    </location>
</feature>
<accession>P28830</accession>
<evidence type="ECO:0000255" key="1">
    <source>
        <dbReference type="HAMAP-Rule" id="MF_04006"/>
    </source>
</evidence>
<evidence type="ECO:0000256" key="2">
    <source>
        <dbReference type="SAM" id="MobiDB-lite"/>
    </source>
</evidence>
<evidence type="ECO:0000305" key="3"/>
<gene>
    <name evidence="1" type="primary">E6</name>
</gene>
<protein>
    <recommendedName>
        <fullName evidence="1">Protein E6</fullName>
    </recommendedName>
</protein>
<organism>
    <name type="scientific">Human papillomavirus 14</name>
    <dbReference type="NCBI Taxonomy" id="10605"/>
    <lineage>
        <taxon>Viruses</taxon>
        <taxon>Monodnaviria</taxon>
        <taxon>Shotokuvirae</taxon>
        <taxon>Cossaviricota</taxon>
        <taxon>Papovaviricetes</taxon>
        <taxon>Zurhausenvirales</taxon>
        <taxon>Papillomaviridae</taxon>
        <taxon>Firstpapillomavirinae</taxon>
        <taxon>Betapapillomavirus</taxon>
        <taxon>Betapapillomavirus 1</taxon>
    </lineage>
</organism>
<organismHost>
    <name type="scientific">Homo sapiens</name>
    <name type="common">Human</name>
    <dbReference type="NCBI Taxonomy" id="9606"/>
</organismHost>
<comment type="function">
    <text evidence="1">Plays a major role in the induction and maintenance of cellular transformation. E6 associates with host UBE3A/E6-AP ubiquitin-protein ligase and modulates its activity. Protects host keratinocytes from apoptosis by mediating the degradation of host BAK1. May also inhibit host immune response.</text>
</comment>
<comment type="subunit">
    <text evidence="1">Forms homodimers. Interacts with ubiquitin-protein ligase UBE3A/E6-AP; this interaction stimulates UBE3A ubiquitin activity. Interacts with host BAK1.</text>
</comment>
<comment type="subcellular location">
    <subcellularLocation>
        <location evidence="1">Host cytoplasm</location>
    </subcellularLocation>
    <subcellularLocation>
        <location evidence="1">Host nucleus</location>
    </subcellularLocation>
</comment>
<comment type="similarity">
    <text evidence="1 3">Belongs to the papillomaviridae E6 protein family.</text>
</comment>
<name>VE6_HPV14</name>
<dbReference type="EMBL" id="D90262">
    <property type="protein sequence ID" value="BAA14309.1"/>
    <property type="molecule type" value="Genomic_DNA"/>
</dbReference>
<dbReference type="SMR" id="P28830"/>
<dbReference type="GO" id="GO:0030430">
    <property type="term" value="C:host cell cytoplasm"/>
    <property type="evidence" value="ECO:0007669"/>
    <property type="project" value="UniProtKB-SubCell"/>
</dbReference>
<dbReference type="GO" id="GO:0042025">
    <property type="term" value="C:host cell nucleus"/>
    <property type="evidence" value="ECO:0007669"/>
    <property type="project" value="UniProtKB-SubCell"/>
</dbReference>
<dbReference type="GO" id="GO:0003677">
    <property type="term" value="F:DNA binding"/>
    <property type="evidence" value="ECO:0007669"/>
    <property type="project" value="UniProtKB-UniRule"/>
</dbReference>
<dbReference type="GO" id="GO:0008270">
    <property type="term" value="F:zinc ion binding"/>
    <property type="evidence" value="ECO:0007669"/>
    <property type="project" value="UniProtKB-KW"/>
</dbReference>
<dbReference type="GO" id="GO:0006351">
    <property type="term" value="P:DNA-templated transcription"/>
    <property type="evidence" value="ECO:0007669"/>
    <property type="project" value="UniProtKB-UniRule"/>
</dbReference>
<dbReference type="GO" id="GO:0006355">
    <property type="term" value="P:regulation of DNA-templated transcription"/>
    <property type="evidence" value="ECO:0007669"/>
    <property type="project" value="UniProtKB-UniRule"/>
</dbReference>
<dbReference type="GO" id="GO:0052150">
    <property type="term" value="P:symbiont-mediated perturbation of host apoptosis"/>
    <property type="evidence" value="ECO:0007669"/>
    <property type="project" value="UniProtKB-KW"/>
</dbReference>
<dbReference type="GO" id="GO:0039648">
    <property type="term" value="P:symbiont-mediated perturbation of host ubiquitin-like protein modification"/>
    <property type="evidence" value="ECO:0007669"/>
    <property type="project" value="UniProtKB-UniRule"/>
</dbReference>
<dbReference type="GO" id="GO:0052170">
    <property type="term" value="P:symbiont-mediated suppression of host innate immune response"/>
    <property type="evidence" value="ECO:0007669"/>
    <property type="project" value="UniProtKB-KW"/>
</dbReference>
<dbReference type="GO" id="GO:0039502">
    <property type="term" value="P:symbiont-mediated suppression of host type I interferon-mediated signaling pathway"/>
    <property type="evidence" value="ECO:0007669"/>
    <property type="project" value="UniProtKB-UniRule"/>
</dbReference>
<dbReference type="Gene3D" id="3.30.240.40">
    <property type="entry name" value="E6 early regulatory protein"/>
    <property type="match status" value="2"/>
</dbReference>
<dbReference type="HAMAP" id="MF_04006">
    <property type="entry name" value="HPV_E6"/>
    <property type="match status" value="1"/>
</dbReference>
<dbReference type="InterPro" id="IPR001334">
    <property type="entry name" value="E6"/>
</dbReference>
<dbReference type="InterPro" id="IPR038575">
    <property type="entry name" value="E6_sf"/>
</dbReference>
<dbReference type="Pfam" id="PF00518">
    <property type="entry name" value="E6"/>
    <property type="match status" value="1"/>
</dbReference>
<dbReference type="SUPFAM" id="SSF161229">
    <property type="entry name" value="E6 C-terminal domain-like"/>
    <property type="match status" value="2"/>
</dbReference>
<sequence>MATTDSSTDSADEGPSPKSSYCDTTETKSSFLEPPLPATICGLANLLEIPLDDCLIPCNFCGNFLTHLEVCEFDQKKLSLIWKGHCVFACCRVCCTATATYEFNEFYESTVEGREIESVTGKSIFNVDVRCYTCMRFLDSIEKLDICGRKLPFHKVRGSWKGICRLCKHFQ</sequence>
<keyword id="KW-0010">Activator</keyword>
<keyword id="KW-0238">DNA-binding</keyword>
<keyword id="KW-0244">Early protein</keyword>
<keyword id="KW-1035">Host cytoplasm</keyword>
<keyword id="KW-1048">Host nucleus</keyword>
<keyword id="KW-0945">Host-virus interaction</keyword>
<keyword id="KW-1090">Inhibition of host innate immune response by virus</keyword>
<keyword id="KW-0479">Metal-binding</keyword>
<keyword id="KW-1119">Modulation of host cell apoptosis by virus</keyword>
<keyword id="KW-0804">Transcription</keyword>
<keyword id="KW-0805">Transcription regulation</keyword>
<keyword id="KW-0899">Viral immunoevasion</keyword>
<keyword id="KW-0862">Zinc</keyword>
<keyword id="KW-0863">Zinc-finger</keyword>
<proteinExistence type="inferred from homology"/>